<gene>
    <name evidence="1" type="primary">rpsC</name>
    <name type="ordered locus">Rfer_3789</name>
</gene>
<comment type="function">
    <text evidence="1">Binds the lower part of the 30S subunit head. Binds mRNA in the 70S ribosome, positioning it for translation.</text>
</comment>
<comment type="subunit">
    <text evidence="1">Part of the 30S ribosomal subunit. Forms a tight complex with proteins S10 and S14.</text>
</comment>
<comment type="similarity">
    <text evidence="1">Belongs to the universal ribosomal protein uS3 family.</text>
</comment>
<reference key="1">
    <citation type="submission" date="2006-02" db="EMBL/GenBank/DDBJ databases">
        <title>Complete sequence of chromosome of Rhodoferax ferrireducens DSM 15236.</title>
        <authorList>
            <person name="Copeland A."/>
            <person name="Lucas S."/>
            <person name="Lapidus A."/>
            <person name="Barry K."/>
            <person name="Detter J.C."/>
            <person name="Glavina del Rio T."/>
            <person name="Hammon N."/>
            <person name="Israni S."/>
            <person name="Pitluck S."/>
            <person name="Brettin T."/>
            <person name="Bruce D."/>
            <person name="Han C."/>
            <person name="Tapia R."/>
            <person name="Gilna P."/>
            <person name="Kiss H."/>
            <person name="Schmutz J."/>
            <person name="Larimer F."/>
            <person name="Land M."/>
            <person name="Kyrpides N."/>
            <person name="Ivanova N."/>
            <person name="Richardson P."/>
        </authorList>
    </citation>
    <scope>NUCLEOTIDE SEQUENCE [LARGE SCALE GENOMIC DNA]</scope>
    <source>
        <strain>ATCC BAA-621 / DSM 15236 / T118</strain>
    </source>
</reference>
<proteinExistence type="inferred from homology"/>
<sequence>MGQKIHPTGFRLSISRNWASRWYANDRDFAGMLAEDIKVREYLKAKLKNASVSRVLIERPAKNARITIFSARPGVVIGKKGEDIENLKRELSRQLGVPVAVNIEEVRKPEIDAKLIADSITQQLEKRIMFRRAMKRAMQNAMRLGALGIKIMSSGRLNGIEIARCEWYREGRVPLHTLRADIDYGTSEAQTTYGIIGVKVWVYKGDTLGRNDLPAAVEARTDEERRPRGPRRDDRGARPGADRPAPRVARRPPMGANTAPSDGSDKPAEATGAGAPKPAVQRVRKVAAPAAAADGKGE</sequence>
<keyword id="KW-1185">Reference proteome</keyword>
<keyword id="KW-0687">Ribonucleoprotein</keyword>
<keyword id="KW-0689">Ribosomal protein</keyword>
<keyword id="KW-0694">RNA-binding</keyword>
<keyword id="KW-0699">rRNA-binding</keyword>
<accession>Q21RW4</accession>
<feature type="chain" id="PRO_0000293867" description="Small ribosomal subunit protein uS3">
    <location>
        <begin position="1"/>
        <end position="298"/>
    </location>
</feature>
<feature type="domain" description="KH type-2" evidence="1">
    <location>
        <begin position="39"/>
        <end position="107"/>
    </location>
</feature>
<feature type="region of interest" description="Disordered" evidence="2">
    <location>
        <begin position="214"/>
        <end position="298"/>
    </location>
</feature>
<feature type="compositionally biased region" description="Basic and acidic residues" evidence="2">
    <location>
        <begin position="219"/>
        <end position="245"/>
    </location>
</feature>
<feature type="compositionally biased region" description="Low complexity" evidence="2">
    <location>
        <begin position="277"/>
        <end position="298"/>
    </location>
</feature>
<protein>
    <recommendedName>
        <fullName evidence="1">Small ribosomal subunit protein uS3</fullName>
    </recommendedName>
    <alternativeName>
        <fullName evidence="3">30S ribosomal protein S3</fullName>
    </alternativeName>
</protein>
<name>RS3_ALBFT</name>
<organism>
    <name type="scientific">Albidiferax ferrireducens (strain ATCC BAA-621 / DSM 15236 / T118)</name>
    <name type="common">Rhodoferax ferrireducens</name>
    <dbReference type="NCBI Taxonomy" id="338969"/>
    <lineage>
        <taxon>Bacteria</taxon>
        <taxon>Pseudomonadati</taxon>
        <taxon>Pseudomonadota</taxon>
        <taxon>Betaproteobacteria</taxon>
        <taxon>Burkholderiales</taxon>
        <taxon>Comamonadaceae</taxon>
        <taxon>Rhodoferax</taxon>
    </lineage>
</organism>
<evidence type="ECO:0000255" key="1">
    <source>
        <dbReference type="HAMAP-Rule" id="MF_01309"/>
    </source>
</evidence>
<evidence type="ECO:0000256" key="2">
    <source>
        <dbReference type="SAM" id="MobiDB-lite"/>
    </source>
</evidence>
<evidence type="ECO:0000305" key="3"/>
<dbReference type="EMBL" id="CP000267">
    <property type="protein sequence ID" value="ABD71489.1"/>
    <property type="molecule type" value="Genomic_DNA"/>
</dbReference>
<dbReference type="RefSeq" id="WP_011466052.1">
    <property type="nucleotide sequence ID" value="NC_007908.1"/>
</dbReference>
<dbReference type="SMR" id="Q21RW4"/>
<dbReference type="STRING" id="338969.Rfer_3789"/>
<dbReference type="KEGG" id="rfr:Rfer_3789"/>
<dbReference type="eggNOG" id="COG0092">
    <property type="taxonomic scope" value="Bacteria"/>
</dbReference>
<dbReference type="HOGENOM" id="CLU_058591_0_2_4"/>
<dbReference type="OrthoDB" id="9806396at2"/>
<dbReference type="Proteomes" id="UP000008332">
    <property type="component" value="Chromosome"/>
</dbReference>
<dbReference type="GO" id="GO:0022627">
    <property type="term" value="C:cytosolic small ribosomal subunit"/>
    <property type="evidence" value="ECO:0007669"/>
    <property type="project" value="TreeGrafter"/>
</dbReference>
<dbReference type="GO" id="GO:0003729">
    <property type="term" value="F:mRNA binding"/>
    <property type="evidence" value="ECO:0007669"/>
    <property type="project" value="UniProtKB-UniRule"/>
</dbReference>
<dbReference type="GO" id="GO:0019843">
    <property type="term" value="F:rRNA binding"/>
    <property type="evidence" value="ECO:0007669"/>
    <property type="project" value="UniProtKB-UniRule"/>
</dbReference>
<dbReference type="GO" id="GO:0003735">
    <property type="term" value="F:structural constituent of ribosome"/>
    <property type="evidence" value="ECO:0007669"/>
    <property type="project" value="InterPro"/>
</dbReference>
<dbReference type="GO" id="GO:0006412">
    <property type="term" value="P:translation"/>
    <property type="evidence" value="ECO:0007669"/>
    <property type="project" value="UniProtKB-UniRule"/>
</dbReference>
<dbReference type="CDD" id="cd02412">
    <property type="entry name" value="KH-II_30S_S3"/>
    <property type="match status" value="1"/>
</dbReference>
<dbReference type="FunFam" id="3.30.1140.32:FF:000006">
    <property type="entry name" value="30S ribosomal protein S3"/>
    <property type="match status" value="1"/>
</dbReference>
<dbReference type="FunFam" id="3.30.300.20:FF:000001">
    <property type="entry name" value="30S ribosomal protein S3"/>
    <property type="match status" value="1"/>
</dbReference>
<dbReference type="Gene3D" id="3.30.300.20">
    <property type="match status" value="1"/>
</dbReference>
<dbReference type="Gene3D" id="3.30.1140.32">
    <property type="entry name" value="Ribosomal protein S3, C-terminal domain"/>
    <property type="match status" value="1"/>
</dbReference>
<dbReference type="HAMAP" id="MF_01309_B">
    <property type="entry name" value="Ribosomal_uS3_B"/>
    <property type="match status" value="1"/>
</dbReference>
<dbReference type="InterPro" id="IPR004087">
    <property type="entry name" value="KH_dom"/>
</dbReference>
<dbReference type="InterPro" id="IPR015946">
    <property type="entry name" value="KH_dom-like_a/b"/>
</dbReference>
<dbReference type="InterPro" id="IPR004044">
    <property type="entry name" value="KH_dom_type_2"/>
</dbReference>
<dbReference type="InterPro" id="IPR009019">
    <property type="entry name" value="KH_sf_prok-type"/>
</dbReference>
<dbReference type="InterPro" id="IPR036419">
    <property type="entry name" value="Ribosomal_S3_C_sf"/>
</dbReference>
<dbReference type="InterPro" id="IPR005704">
    <property type="entry name" value="Ribosomal_uS3_bac-typ"/>
</dbReference>
<dbReference type="InterPro" id="IPR001351">
    <property type="entry name" value="Ribosomal_uS3_C"/>
</dbReference>
<dbReference type="InterPro" id="IPR018280">
    <property type="entry name" value="Ribosomal_uS3_CS"/>
</dbReference>
<dbReference type="NCBIfam" id="TIGR01009">
    <property type="entry name" value="rpsC_bact"/>
    <property type="match status" value="1"/>
</dbReference>
<dbReference type="PANTHER" id="PTHR11760">
    <property type="entry name" value="30S/40S RIBOSOMAL PROTEIN S3"/>
    <property type="match status" value="1"/>
</dbReference>
<dbReference type="PANTHER" id="PTHR11760:SF19">
    <property type="entry name" value="SMALL RIBOSOMAL SUBUNIT PROTEIN US3C"/>
    <property type="match status" value="1"/>
</dbReference>
<dbReference type="Pfam" id="PF07650">
    <property type="entry name" value="KH_2"/>
    <property type="match status" value="1"/>
</dbReference>
<dbReference type="Pfam" id="PF00189">
    <property type="entry name" value="Ribosomal_S3_C"/>
    <property type="match status" value="1"/>
</dbReference>
<dbReference type="SMART" id="SM00322">
    <property type="entry name" value="KH"/>
    <property type="match status" value="1"/>
</dbReference>
<dbReference type="SUPFAM" id="SSF54814">
    <property type="entry name" value="Prokaryotic type KH domain (KH-domain type II)"/>
    <property type="match status" value="1"/>
</dbReference>
<dbReference type="SUPFAM" id="SSF54821">
    <property type="entry name" value="Ribosomal protein S3 C-terminal domain"/>
    <property type="match status" value="1"/>
</dbReference>
<dbReference type="PROSITE" id="PS50823">
    <property type="entry name" value="KH_TYPE_2"/>
    <property type="match status" value="1"/>
</dbReference>
<dbReference type="PROSITE" id="PS00548">
    <property type="entry name" value="RIBOSOMAL_S3"/>
    <property type="match status" value="1"/>
</dbReference>